<reference key="1">
    <citation type="journal article" date="2003" name="Science">
        <title>Genome of Geobacter sulfurreducens: metal reduction in subsurface environments.</title>
        <authorList>
            <person name="Methe B.A."/>
            <person name="Nelson K.E."/>
            <person name="Eisen J.A."/>
            <person name="Paulsen I.T."/>
            <person name="Nelson W.C."/>
            <person name="Heidelberg J.F."/>
            <person name="Wu D."/>
            <person name="Wu M."/>
            <person name="Ward N.L."/>
            <person name="Beanan M.J."/>
            <person name="Dodson R.J."/>
            <person name="Madupu R."/>
            <person name="Brinkac L.M."/>
            <person name="Daugherty S.C."/>
            <person name="DeBoy R.T."/>
            <person name="Durkin A.S."/>
            <person name="Gwinn M.L."/>
            <person name="Kolonay J.F."/>
            <person name="Sullivan S.A."/>
            <person name="Haft D.H."/>
            <person name="Selengut J."/>
            <person name="Davidsen T.M."/>
            <person name="Zafar N."/>
            <person name="White O."/>
            <person name="Tran B."/>
            <person name="Romero C."/>
            <person name="Forberger H.A."/>
            <person name="Weidman J.F."/>
            <person name="Khouri H.M."/>
            <person name="Feldblyum T.V."/>
            <person name="Utterback T.R."/>
            <person name="Van Aken S.E."/>
            <person name="Lovley D.R."/>
            <person name="Fraser C.M."/>
        </authorList>
    </citation>
    <scope>NUCLEOTIDE SEQUENCE [LARGE SCALE GENOMIC DNA]</scope>
    <source>
        <strain>ATCC 51573 / DSM 12127 / PCA</strain>
    </source>
</reference>
<protein>
    <recommendedName>
        <fullName evidence="1">Thiazole synthase</fullName>
        <ecNumber evidence="1">2.8.1.10</ecNumber>
    </recommendedName>
</protein>
<comment type="function">
    <text evidence="1">Catalyzes the rearrangement of 1-deoxy-D-xylulose 5-phosphate (DXP) to produce the thiazole phosphate moiety of thiamine. Sulfur is provided by the thiocarboxylate moiety of the carrier protein ThiS. In vitro, sulfur can be provided by H(2)S.</text>
</comment>
<comment type="catalytic activity">
    <reaction evidence="1">
        <text>[ThiS sulfur-carrier protein]-C-terminal-Gly-aminoethanethioate + 2-iminoacetate + 1-deoxy-D-xylulose 5-phosphate = [ThiS sulfur-carrier protein]-C-terminal Gly-Gly + 2-[(2R,5Z)-2-carboxy-4-methylthiazol-5(2H)-ylidene]ethyl phosphate + 2 H2O + H(+)</text>
        <dbReference type="Rhea" id="RHEA:26297"/>
        <dbReference type="Rhea" id="RHEA-COMP:12909"/>
        <dbReference type="Rhea" id="RHEA-COMP:19908"/>
        <dbReference type="ChEBI" id="CHEBI:15377"/>
        <dbReference type="ChEBI" id="CHEBI:15378"/>
        <dbReference type="ChEBI" id="CHEBI:57792"/>
        <dbReference type="ChEBI" id="CHEBI:62899"/>
        <dbReference type="ChEBI" id="CHEBI:77846"/>
        <dbReference type="ChEBI" id="CHEBI:90778"/>
        <dbReference type="ChEBI" id="CHEBI:232372"/>
        <dbReference type="EC" id="2.8.1.10"/>
    </reaction>
</comment>
<comment type="pathway">
    <text evidence="1">Cofactor biosynthesis; thiamine diphosphate biosynthesis.</text>
</comment>
<comment type="subunit">
    <text evidence="1">Homotetramer. Forms heterodimers with either ThiH or ThiS.</text>
</comment>
<comment type="subcellular location">
    <subcellularLocation>
        <location evidence="1">Cytoplasm</location>
    </subcellularLocation>
</comment>
<comment type="similarity">
    <text evidence="1">Belongs to the ThiG family.</text>
</comment>
<accession>Q74FL9</accession>
<dbReference type="EC" id="2.8.1.10" evidence="1"/>
<dbReference type="EMBL" id="AE017180">
    <property type="protein sequence ID" value="AAR33919.1"/>
    <property type="molecule type" value="Genomic_DNA"/>
</dbReference>
<dbReference type="RefSeq" id="NP_951646.1">
    <property type="nucleotide sequence ID" value="NC_002939.5"/>
</dbReference>
<dbReference type="RefSeq" id="WP_010941251.1">
    <property type="nucleotide sequence ID" value="NC_002939.5"/>
</dbReference>
<dbReference type="SMR" id="Q74FL9"/>
<dbReference type="FunCoup" id="Q74FL9">
    <property type="interactions" value="372"/>
</dbReference>
<dbReference type="STRING" id="243231.GSU0588"/>
<dbReference type="EnsemblBacteria" id="AAR33919">
    <property type="protein sequence ID" value="AAR33919"/>
    <property type="gene ID" value="GSU0588"/>
</dbReference>
<dbReference type="KEGG" id="gsu:GSU0588"/>
<dbReference type="PATRIC" id="fig|243231.5.peg.586"/>
<dbReference type="eggNOG" id="COG2022">
    <property type="taxonomic scope" value="Bacteria"/>
</dbReference>
<dbReference type="HOGENOM" id="CLU_062233_1_0_7"/>
<dbReference type="InParanoid" id="Q74FL9"/>
<dbReference type="OrthoDB" id="9805935at2"/>
<dbReference type="UniPathway" id="UPA00060"/>
<dbReference type="Proteomes" id="UP000000577">
    <property type="component" value="Chromosome"/>
</dbReference>
<dbReference type="GO" id="GO:1902508">
    <property type="term" value="C:2-iminoacetate synthase complex"/>
    <property type="evidence" value="ECO:0000318"/>
    <property type="project" value="GO_Central"/>
</dbReference>
<dbReference type="GO" id="GO:0005737">
    <property type="term" value="C:cytoplasm"/>
    <property type="evidence" value="ECO:0007669"/>
    <property type="project" value="UniProtKB-SubCell"/>
</dbReference>
<dbReference type="GO" id="GO:1990107">
    <property type="term" value="F:thiazole synthase activity"/>
    <property type="evidence" value="ECO:0007669"/>
    <property type="project" value="UniProtKB-EC"/>
</dbReference>
<dbReference type="GO" id="GO:0009228">
    <property type="term" value="P:thiamine biosynthetic process"/>
    <property type="evidence" value="ECO:0000318"/>
    <property type="project" value="GO_Central"/>
</dbReference>
<dbReference type="GO" id="GO:0009229">
    <property type="term" value="P:thiamine diphosphate biosynthetic process"/>
    <property type="evidence" value="ECO:0000318"/>
    <property type="project" value="GO_Central"/>
</dbReference>
<dbReference type="CDD" id="cd04728">
    <property type="entry name" value="ThiG"/>
    <property type="match status" value="1"/>
</dbReference>
<dbReference type="FunFam" id="3.20.20.70:FF:000049">
    <property type="entry name" value="Thiazole synthase"/>
    <property type="match status" value="1"/>
</dbReference>
<dbReference type="Gene3D" id="3.20.20.70">
    <property type="entry name" value="Aldolase class I"/>
    <property type="match status" value="1"/>
</dbReference>
<dbReference type="HAMAP" id="MF_00443">
    <property type="entry name" value="ThiG"/>
    <property type="match status" value="1"/>
</dbReference>
<dbReference type="InterPro" id="IPR013785">
    <property type="entry name" value="Aldolase_TIM"/>
</dbReference>
<dbReference type="InterPro" id="IPR033983">
    <property type="entry name" value="Thiazole_synthase_ThiG"/>
</dbReference>
<dbReference type="InterPro" id="IPR008867">
    <property type="entry name" value="ThiG"/>
</dbReference>
<dbReference type="PANTHER" id="PTHR34266">
    <property type="entry name" value="THIAZOLE SYNTHASE"/>
    <property type="match status" value="1"/>
</dbReference>
<dbReference type="PANTHER" id="PTHR34266:SF2">
    <property type="entry name" value="THIAZOLE SYNTHASE"/>
    <property type="match status" value="1"/>
</dbReference>
<dbReference type="Pfam" id="PF05690">
    <property type="entry name" value="ThiG"/>
    <property type="match status" value="1"/>
</dbReference>
<dbReference type="SUPFAM" id="SSF110399">
    <property type="entry name" value="ThiG-like"/>
    <property type="match status" value="1"/>
</dbReference>
<feature type="chain" id="PRO_0000162823" description="Thiazole synthase">
    <location>
        <begin position="1"/>
        <end position="260"/>
    </location>
</feature>
<feature type="active site" description="Schiff-base intermediate with DXP" evidence="1">
    <location>
        <position position="102"/>
    </location>
</feature>
<feature type="binding site" evidence="1">
    <location>
        <position position="163"/>
    </location>
    <ligand>
        <name>1-deoxy-D-xylulose 5-phosphate</name>
        <dbReference type="ChEBI" id="CHEBI:57792"/>
    </ligand>
</feature>
<feature type="binding site" evidence="1">
    <location>
        <begin position="189"/>
        <end position="190"/>
    </location>
    <ligand>
        <name>1-deoxy-D-xylulose 5-phosphate</name>
        <dbReference type="ChEBI" id="CHEBI:57792"/>
    </ligand>
</feature>
<feature type="binding site" evidence="1">
    <location>
        <begin position="211"/>
        <end position="212"/>
    </location>
    <ligand>
        <name>1-deoxy-D-xylulose 5-phosphate</name>
        <dbReference type="ChEBI" id="CHEBI:57792"/>
    </ligand>
</feature>
<keyword id="KW-0963">Cytoplasm</keyword>
<keyword id="KW-1185">Reference proteome</keyword>
<keyword id="KW-0704">Schiff base</keyword>
<keyword id="KW-0784">Thiamine biosynthesis</keyword>
<keyword id="KW-0808">Transferase</keyword>
<sequence>MSNAADKLVIAGREFSSRLMVGTGKYASNEQMIKALEVSGAEIITVAVRRVNLADRGKGCLLDFIDPKKYTLLPNTAGCYTADDAVRTCRLAREAGMSDLVKLEVLGDEKTLFPDNEELLKAAKILVKEGFTVLPYTSDDPIVCKKLEDIGCAAVMPLGAPIGSGLGIRNPYNILIIKETVKVPVIVDAGVGTASDAAIAMELGIDGVLMNTGIAGARDPIAMAEAMNMAVRAGRLAYLAGRIPKKLYATASSPIEGMIG</sequence>
<evidence type="ECO:0000255" key="1">
    <source>
        <dbReference type="HAMAP-Rule" id="MF_00443"/>
    </source>
</evidence>
<organism>
    <name type="scientific">Geobacter sulfurreducens (strain ATCC 51573 / DSM 12127 / PCA)</name>
    <dbReference type="NCBI Taxonomy" id="243231"/>
    <lineage>
        <taxon>Bacteria</taxon>
        <taxon>Pseudomonadati</taxon>
        <taxon>Thermodesulfobacteriota</taxon>
        <taxon>Desulfuromonadia</taxon>
        <taxon>Geobacterales</taxon>
        <taxon>Geobacteraceae</taxon>
        <taxon>Geobacter</taxon>
    </lineage>
</organism>
<proteinExistence type="inferred from homology"/>
<gene>
    <name evidence="1" type="primary">thiG</name>
    <name type="ordered locus">GSU0588</name>
</gene>
<name>THIG_GEOSL</name>